<feature type="chain" id="PRO_1000132860" description="Large ribosomal subunit protein uL11">
    <location>
        <begin position="1"/>
        <end position="150"/>
    </location>
</feature>
<comment type="function">
    <text evidence="1">Forms part of the ribosomal stalk which helps the ribosome interact with GTP-bound translation factors.</text>
</comment>
<comment type="subunit">
    <text evidence="1">Part of the ribosomal stalk of the 50S ribosomal subunit. Interacts with L10 and the large rRNA to form the base of the stalk. L10 forms an elongated spine to which L12 dimers bind in a sequential fashion forming a multimeric L10(L12)X complex.</text>
</comment>
<comment type="PTM">
    <text evidence="1">One or more lysine residues are methylated.</text>
</comment>
<comment type="similarity">
    <text evidence="1">Belongs to the universal ribosomal protein uL11 family.</text>
</comment>
<sequence length="150" mass="16491">MAKEVAGKLRLQIRGGAANPSPPVGPALGSKGVNIMEFCKQFNAKTQDRIGKLLPVVVTYYVDKSFDFVIKNPPVAVQLLEIVKLKSGSAEPNRKKIAEITWEQVKAIAEYKMADLNCFSVEKAIQMVIGTAKSMGIHVKRDFSEKQLNS</sequence>
<name>RL11_AZOPC</name>
<gene>
    <name evidence="1" type="primary">rplK</name>
    <name type="ordered locus">CFPG_010</name>
</gene>
<protein>
    <recommendedName>
        <fullName evidence="1">Large ribosomal subunit protein uL11</fullName>
    </recommendedName>
    <alternativeName>
        <fullName evidence="2">50S ribosomal protein L11</fullName>
    </alternativeName>
</protein>
<reference key="1">
    <citation type="journal article" date="2008" name="Science">
        <title>Genome of an endosymbiont coupling N2 fixation to cellulolysis within RT protist cells in termite gut.</title>
        <authorList>
            <person name="Hongoh Y."/>
            <person name="Sharma V.K."/>
            <person name="Prakash T."/>
            <person name="Noda S."/>
            <person name="Toh H."/>
            <person name="Taylor T.D."/>
            <person name="Kudo T."/>
            <person name="Sakaki Y."/>
            <person name="Toyoda A."/>
            <person name="Hattori M."/>
            <person name="Ohkuma M."/>
        </authorList>
    </citation>
    <scope>NUCLEOTIDE SEQUENCE [LARGE SCALE GENOMIC DNA]</scope>
</reference>
<keyword id="KW-0488">Methylation</keyword>
<keyword id="KW-1185">Reference proteome</keyword>
<keyword id="KW-0687">Ribonucleoprotein</keyword>
<keyword id="KW-0689">Ribosomal protein</keyword>
<keyword id="KW-0694">RNA-binding</keyword>
<keyword id="KW-0699">rRNA-binding</keyword>
<proteinExistence type="inferred from homology"/>
<organism>
    <name type="scientific">Azobacteroides pseudotrichonymphae genomovar. CFP2</name>
    <dbReference type="NCBI Taxonomy" id="511995"/>
    <lineage>
        <taxon>Bacteria</taxon>
        <taxon>Pseudomonadati</taxon>
        <taxon>Bacteroidota</taxon>
        <taxon>Bacteroidia</taxon>
        <taxon>Bacteroidales</taxon>
        <taxon>Candidatus Azobacteroides</taxon>
    </lineage>
</organism>
<accession>B6YQ01</accession>
<dbReference type="EMBL" id="AP010656">
    <property type="protein sequence ID" value="BAG83273.1"/>
    <property type="molecule type" value="Genomic_DNA"/>
</dbReference>
<dbReference type="RefSeq" id="WP_012573034.1">
    <property type="nucleotide sequence ID" value="NC_011565.1"/>
</dbReference>
<dbReference type="SMR" id="B6YQ01"/>
<dbReference type="STRING" id="511995.CFPG_010"/>
<dbReference type="KEGG" id="aps:CFPG_010"/>
<dbReference type="eggNOG" id="COG0080">
    <property type="taxonomic scope" value="Bacteria"/>
</dbReference>
<dbReference type="HOGENOM" id="CLU_074237_2_1_10"/>
<dbReference type="OrthoDB" id="9802408at2"/>
<dbReference type="Proteomes" id="UP000000723">
    <property type="component" value="Chromosome"/>
</dbReference>
<dbReference type="GO" id="GO:0022625">
    <property type="term" value="C:cytosolic large ribosomal subunit"/>
    <property type="evidence" value="ECO:0007669"/>
    <property type="project" value="TreeGrafter"/>
</dbReference>
<dbReference type="GO" id="GO:0070180">
    <property type="term" value="F:large ribosomal subunit rRNA binding"/>
    <property type="evidence" value="ECO:0007669"/>
    <property type="project" value="UniProtKB-UniRule"/>
</dbReference>
<dbReference type="GO" id="GO:0003735">
    <property type="term" value="F:structural constituent of ribosome"/>
    <property type="evidence" value="ECO:0007669"/>
    <property type="project" value="InterPro"/>
</dbReference>
<dbReference type="GO" id="GO:0006412">
    <property type="term" value="P:translation"/>
    <property type="evidence" value="ECO:0007669"/>
    <property type="project" value="UniProtKB-UniRule"/>
</dbReference>
<dbReference type="CDD" id="cd00349">
    <property type="entry name" value="Ribosomal_L11"/>
    <property type="match status" value="1"/>
</dbReference>
<dbReference type="FunFam" id="1.10.10.250:FF:000001">
    <property type="entry name" value="50S ribosomal protein L11"/>
    <property type="match status" value="1"/>
</dbReference>
<dbReference type="FunFam" id="3.30.1550.10:FF:000006">
    <property type="entry name" value="50S ribosomal protein L11"/>
    <property type="match status" value="1"/>
</dbReference>
<dbReference type="Gene3D" id="1.10.10.250">
    <property type="entry name" value="Ribosomal protein L11, C-terminal domain"/>
    <property type="match status" value="1"/>
</dbReference>
<dbReference type="Gene3D" id="3.30.1550.10">
    <property type="entry name" value="Ribosomal protein L11/L12, N-terminal domain"/>
    <property type="match status" value="1"/>
</dbReference>
<dbReference type="HAMAP" id="MF_00736">
    <property type="entry name" value="Ribosomal_uL11"/>
    <property type="match status" value="1"/>
</dbReference>
<dbReference type="InterPro" id="IPR000911">
    <property type="entry name" value="Ribosomal_uL11"/>
</dbReference>
<dbReference type="InterPro" id="IPR006519">
    <property type="entry name" value="Ribosomal_uL11_bac-typ"/>
</dbReference>
<dbReference type="InterPro" id="IPR020783">
    <property type="entry name" value="Ribosomal_uL11_C"/>
</dbReference>
<dbReference type="InterPro" id="IPR036769">
    <property type="entry name" value="Ribosomal_uL11_C_sf"/>
</dbReference>
<dbReference type="InterPro" id="IPR020784">
    <property type="entry name" value="Ribosomal_uL11_N"/>
</dbReference>
<dbReference type="InterPro" id="IPR036796">
    <property type="entry name" value="Ribosomal_uL11_N_sf"/>
</dbReference>
<dbReference type="NCBIfam" id="TIGR01632">
    <property type="entry name" value="L11_bact"/>
    <property type="match status" value="1"/>
</dbReference>
<dbReference type="PANTHER" id="PTHR11661">
    <property type="entry name" value="60S RIBOSOMAL PROTEIN L12"/>
    <property type="match status" value="1"/>
</dbReference>
<dbReference type="PANTHER" id="PTHR11661:SF1">
    <property type="entry name" value="LARGE RIBOSOMAL SUBUNIT PROTEIN UL11M"/>
    <property type="match status" value="1"/>
</dbReference>
<dbReference type="Pfam" id="PF00298">
    <property type="entry name" value="Ribosomal_L11"/>
    <property type="match status" value="1"/>
</dbReference>
<dbReference type="Pfam" id="PF03946">
    <property type="entry name" value="Ribosomal_L11_N"/>
    <property type="match status" value="1"/>
</dbReference>
<dbReference type="SMART" id="SM00649">
    <property type="entry name" value="RL11"/>
    <property type="match status" value="1"/>
</dbReference>
<dbReference type="SUPFAM" id="SSF54747">
    <property type="entry name" value="Ribosomal L11/L12e N-terminal domain"/>
    <property type="match status" value="1"/>
</dbReference>
<dbReference type="SUPFAM" id="SSF46906">
    <property type="entry name" value="Ribosomal protein L11, C-terminal domain"/>
    <property type="match status" value="1"/>
</dbReference>
<evidence type="ECO:0000255" key="1">
    <source>
        <dbReference type="HAMAP-Rule" id="MF_00736"/>
    </source>
</evidence>
<evidence type="ECO:0000305" key="2"/>